<organism>
    <name type="scientific">Xylella fastidiosa (strain M12)</name>
    <dbReference type="NCBI Taxonomy" id="405440"/>
    <lineage>
        <taxon>Bacteria</taxon>
        <taxon>Pseudomonadati</taxon>
        <taxon>Pseudomonadota</taxon>
        <taxon>Gammaproteobacteria</taxon>
        <taxon>Lysobacterales</taxon>
        <taxon>Lysobacteraceae</taxon>
        <taxon>Xylella</taxon>
    </lineage>
</organism>
<dbReference type="EC" id="4.2.1.59" evidence="1"/>
<dbReference type="EC" id="5.3.3.14" evidence="1"/>
<dbReference type="EMBL" id="CP000941">
    <property type="protein sequence ID" value="ACA12631.1"/>
    <property type="molecule type" value="Genomic_DNA"/>
</dbReference>
<dbReference type="RefSeq" id="WP_004083538.1">
    <property type="nucleotide sequence ID" value="NC_010513.1"/>
</dbReference>
<dbReference type="SMR" id="B0U452"/>
<dbReference type="KEGG" id="xfm:Xfasm12_1731"/>
<dbReference type="HOGENOM" id="CLU_097925_0_0_6"/>
<dbReference type="UniPathway" id="UPA00094"/>
<dbReference type="GO" id="GO:0005737">
    <property type="term" value="C:cytoplasm"/>
    <property type="evidence" value="ECO:0007669"/>
    <property type="project" value="UniProtKB-SubCell"/>
</dbReference>
<dbReference type="GO" id="GO:0019171">
    <property type="term" value="F:(3R)-hydroxyacyl-[acyl-carrier-protein] dehydratase activity"/>
    <property type="evidence" value="ECO:0007669"/>
    <property type="project" value="UniProtKB-UniRule"/>
</dbReference>
<dbReference type="GO" id="GO:0034017">
    <property type="term" value="F:trans-2-decenoyl-acyl-carrier-protein isomerase activity"/>
    <property type="evidence" value="ECO:0007669"/>
    <property type="project" value="UniProtKB-UniRule"/>
</dbReference>
<dbReference type="GO" id="GO:0006636">
    <property type="term" value="P:unsaturated fatty acid biosynthetic process"/>
    <property type="evidence" value="ECO:0007669"/>
    <property type="project" value="UniProtKB-UniRule"/>
</dbReference>
<dbReference type="Gene3D" id="3.10.129.10">
    <property type="entry name" value="Hotdog Thioesterase"/>
    <property type="match status" value="1"/>
</dbReference>
<dbReference type="HAMAP" id="MF_00405">
    <property type="entry name" value="FabA"/>
    <property type="match status" value="1"/>
</dbReference>
<dbReference type="InterPro" id="IPR010083">
    <property type="entry name" value="FabA"/>
</dbReference>
<dbReference type="InterPro" id="IPR013114">
    <property type="entry name" value="FabA_FabZ"/>
</dbReference>
<dbReference type="InterPro" id="IPR029069">
    <property type="entry name" value="HotDog_dom_sf"/>
</dbReference>
<dbReference type="NCBIfam" id="TIGR01749">
    <property type="entry name" value="fabA"/>
    <property type="match status" value="1"/>
</dbReference>
<dbReference type="NCBIfam" id="NF003509">
    <property type="entry name" value="PRK05174.1"/>
    <property type="match status" value="1"/>
</dbReference>
<dbReference type="PANTHER" id="PTHR30272">
    <property type="entry name" value="3-HYDROXYACYL-[ACYL-CARRIER-PROTEIN] DEHYDRATASE"/>
    <property type="match status" value="1"/>
</dbReference>
<dbReference type="PANTHER" id="PTHR30272:SF8">
    <property type="entry name" value="3-HYDROXYDECANOYL-[ACYL-CARRIER-PROTEIN] DEHYDRATASE"/>
    <property type="match status" value="1"/>
</dbReference>
<dbReference type="Pfam" id="PF07977">
    <property type="entry name" value="FabA"/>
    <property type="match status" value="1"/>
</dbReference>
<dbReference type="SUPFAM" id="SSF54637">
    <property type="entry name" value="Thioesterase/thiol ester dehydrase-isomerase"/>
    <property type="match status" value="1"/>
</dbReference>
<name>FABA_XYLFM</name>
<sequence>MSRQHAYSREELLATARGELFSHSNARLPNDPMLMFDRITGIYADGGSHGKGIVNAELDIRPDLWFFGCHFLGDPVMPGCLGLDAMWQLTGFFLTWSGATPGYGRALGCGEVKFTGQVLPNAKLVRYEVEMTKIINRTLVIGQANARMLVDNREIYFAKDLRVGMFNNTESF</sequence>
<gene>
    <name evidence="1" type="primary">fabA</name>
    <name type="ordered locus">Xfasm12_1731</name>
</gene>
<protein>
    <recommendedName>
        <fullName evidence="1">3-hydroxydecanoyl-[acyl-carrier-protein] dehydratase</fullName>
        <ecNumber evidence="1">4.2.1.59</ecNumber>
    </recommendedName>
    <alternativeName>
        <fullName evidence="1">3-hydroxyacyl-[acyl-carrier-protein] dehydratase FabA</fullName>
    </alternativeName>
    <alternativeName>
        <fullName evidence="1">Beta-hydroxydecanoyl thioester dehydrase</fullName>
    </alternativeName>
    <alternativeName>
        <fullName evidence="1">Trans-2-decenoyl-[acyl-carrier-protein] isomerase</fullName>
        <ecNumber evidence="1">5.3.3.14</ecNumber>
    </alternativeName>
</protein>
<comment type="function">
    <text evidence="1">Necessary for the introduction of cis unsaturation into fatty acids. Catalyzes the dehydration of (3R)-3-hydroxydecanoyl-ACP to E-(2)-decenoyl-ACP and then its isomerization to Z-(3)-decenoyl-ACP. Can catalyze the dehydratase reaction for beta-hydroxyacyl-ACPs with saturated chain lengths up to 16:0, being most active on intermediate chain length.</text>
</comment>
<comment type="catalytic activity">
    <reaction evidence="1">
        <text>a (3R)-hydroxyacyl-[ACP] = a (2E)-enoyl-[ACP] + H2O</text>
        <dbReference type="Rhea" id="RHEA:13097"/>
        <dbReference type="Rhea" id="RHEA-COMP:9925"/>
        <dbReference type="Rhea" id="RHEA-COMP:9945"/>
        <dbReference type="ChEBI" id="CHEBI:15377"/>
        <dbReference type="ChEBI" id="CHEBI:78784"/>
        <dbReference type="ChEBI" id="CHEBI:78827"/>
        <dbReference type="EC" id="4.2.1.59"/>
    </reaction>
</comment>
<comment type="catalytic activity">
    <reaction evidence="1">
        <text>(3R)-hydroxydecanoyl-[ACP] = (2E)-decenoyl-[ACP] + H2O</text>
        <dbReference type="Rhea" id="RHEA:41860"/>
        <dbReference type="Rhea" id="RHEA-COMP:9638"/>
        <dbReference type="Rhea" id="RHEA-COMP:9639"/>
        <dbReference type="ChEBI" id="CHEBI:15377"/>
        <dbReference type="ChEBI" id="CHEBI:78466"/>
        <dbReference type="ChEBI" id="CHEBI:78467"/>
    </reaction>
</comment>
<comment type="catalytic activity">
    <reaction evidence="1">
        <text>(2E)-decenoyl-[ACP] = (3Z)-decenoyl-[ACP]</text>
        <dbReference type="Rhea" id="RHEA:23568"/>
        <dbReference type="Rhea" id="RHEA-COMP:9639"/>
        <dbReference type="Rhea" id="RHEA-COMP:9927"/>
        <dbReference type="ChEBI" id="CHEBI:78467"/>
        <dbReference type="ChEBI" id="CHEBI:78798"/>
        <dbReference type="EC" id="5.3.3.14"/>
    </reaction>
</comment>
<comment type="pathway">
    <text evidence="1">Lipid metabolism; fatty acid biosynthesis.</text>
</comment>
<comment type="subunit">
    <text evidence="1">Homodimer.</text>
</comment>
<comment type="subcellular location">
    <subcellularLocation>
        <location evidence="1">Cytoplasm</location>
    </subcellularLocation>
</comment>
<comment type="similarity">
    <text evidence="1">Belongs to the thioester dehydratase family. FabA subfamily.</text>
</comment>
<reference key="1">
    <citation type="journal article" date="2010" name="J. Bacteriol.">
        <title>Whole genome sequences of two Xylella fastidiosa strains (M12 and M23) causing almond leaf scorch disease in California.</title>
        <authorList>
            <person name="Chen J."/>
            <person name="Xie G."/>
            <person name="Han S."/>
            <person name="Chertkov O."/>
            <person name="Sims D."/>
            <person name="Civerolo E.L."/>
        </authorList>
    </citation>
    <scope>NUCLEOTIDE SEQUENCE [LARGE SCALE GENOMIC DNA]</scope>
    <source>
        <strain>M12</strain>
    </source>
</reference>
<proteinExistence type="inferred from homology"/>
<feature type="chain" id="PRO_1000201228" description="3-hydroxydecanoyl-[acyl-carrier-protein] dehydratase">
    <location>
        <begin position="1"/>
        <end position="172"/>
    </location>
</feature>
<feature type="active site" evidence="1">
    <location>
        <position position="70"/>
    </location>
</feature>
<evidence type="ECO:0000255" key="1">
    <source>
        <dbReference type="HAMAP-Rule" id="MF_00405"/>
    </source>
</evidence>
<accession>B0U452</accession>
<keyword id="KW-0963">Cytoplasm</keyword>
<keyword id="KW-0275">Fatty acid biosynthesis</keyword>
<keyword id="KW-0276">Fatty acid metabolism</keyword>
<keyword id="KW-0413">Isomerase</keyword>
<keyword id="KW-0444">Lipid biosynthesis</keyword>
<keyword id="KW-0443">Lipid metabolism</keyword>
<keyword id="KW-0456">Lyase</keyword>